<gene>
    <name type="primary">RPP1B</name>
</gene>
<protein>
    <recommendedName>
        <fullName evidence="4">Large ribosomal subunit protein P1B</fullName>
    </recommendedName>
    <alternativeName>
        <fullName>60S acidic ribosomal protein P1-B</fullName>
        <shortName>CaRP1B</shortName>
    </alternativeName>
</protein>
<organism evidence="5">
    <name type="scientific">Candida albicans</name>
    <name type="common">Yeast</name>
    <dbReference type="NCBI Taxonomy" id="5476"/>
    <lineage>
        <taxon>Eukaryota</taxon>
        <taxon>Fungi</taxon>
        <taxon>Dikarya</taxon>
        <taxon>Ascomycota</taxon>
        <taxon>Saccharomycotina</taxon>
        <taxon>Pichiomycetes</taxon>
        <taxon>Debaryomycetaceae</taxon>
        <taxon>Candida/Lodderomyces clade</taxon>
        <taxon>Candida</taxon>
    </lineage>
</organism>
<reference evidence="4" key="1">
    <citation type="submission" date="2000-11" db="EMBL/GenBank/DDBJ databases">
        <title>Cloning, expression and purification of the acidic ribosomal protein from Candida albicans.</title>
        <authorList>
            <person name="Abramczyk D."/>
            <person name="Tchorzewski M."/>
            <person name="Grankowski N."/>
        </authorList>
    </citation>
    <scope>NUCLEOTIDE SEQUENCE [GENOMIC DNA]</scope>
    <source>
        <strain>ATCC 10231 / CBS 6431 / CIP 48.72 / DSM 1386 / NBRC 1594</strain>
    </source>
</reference>
<reference key="2">
    <citation type="journal article" date="2004" name="Biochim. Biophys. Acta">
        <title>Overexpression, purification and characterization of the acidic ribosomal P-proteins from Candida albicans.</title>
        <authorList>
            <person name="Abramczyk D."/>
            <person name="Tchorzewski M."/>
            <person name="Krokowski D."/>
            <person name="Boguszewska A."/>
            <person name="Grankowski N."/>
        </authorList>
    </citation>
    <scope>PROTEIN SEQUENCE OF 1-20</scope>
    <source>
        <strain>ATCC 10231 / CBS 6431 / CIP 48.72 / DSM 1386 / NBRC 1594</strain>
    </source>
</reference>
<comment type="function">
    <text evidence="2">Plays an important role in the elongation step of protein synthesis.</text>
</comment>
<comment type="subunit">
    <text evidence="1">P1 and P2 exist as dimers at the large ribosomal subunit.</text>
</comment>
<comment type="PTM">
    <text evidence="1">Phosphorylated.</text>
</comment>
<comment type="similarity">
    <text evidence="4">Belongs to the eukaryotic ribosomal protein P1/P2 family.</text>
</comment>
<proteinExistence type="evidence at protein level"/>
<feature type="chain" id="PRO_0000157704" description="Large ribosomal subunit protein P1B">
    <location>
        <begin position="1"/>
        <end position="108"/>
    </location>
</feature>
<feature type="region of interest" description="Disordered" evidence="3">
    <location>
        <begin position="72"/>
        <end position="108"/>
    </location>
</feature>
<feature type="compositionally biased region" description="Low complexity" evidence="3">
    <location>
        <begin position="72"/>
        <end position="84"/>
    </location>
</feature>
<feature type="compositionally biased region" description="Acidic residues" evidence="3">
    <location>
        <begin position="85"/>
        <end position="102"/>
    </location>
</feature>
<dbReference type="EMBL" id="AF317660">
    <property type="protein sequence ID" value="AAG33241.1"/>
    <property type="molecule type" value="Genomic_DNA"/>
</dbReference>
<dbReference type="SMR" id="Q9HFQ6"/>
<dbReference type="VEuPathDB" id="FungiDB:C7_03920C_A"/>
<dbReference type="VEuPathDB" id="FungiDB:CAWG_05722"/>
<dbReference type="GO" id="GO:0022625">
    <property type="term" value="C:cytosolic large ribosomal subunit"/>
    <property type="evidence" value="ECO:0007669"/>
    <property type="project" value="TreeGrafter"/>
</dbReference>
<dbReference type="GO" id="GO:0042802">
    <property type="term" value="F:identical protein binding"/>
    <property type="evidence" value="ECO:0000314"/>
    <property type="project" value="CAFA"/>
</dbReference>
<dbReference type="GO" id="GO:0030295">
    <property type="term" value="F:protein kinase activator activity"/>
    <property type="evidence" value="ECO:0007669"/>
    <property type="project" value="TreeGrafter"/>
</dbReference>
<dbReference type="GO" id="GO:0043021">
    <property type="term" value="F:ribonucleoprotein complex binding"/>
    <property type="evidence" value="ECO:0007669"/>
    <property type="project" value="TreeGrafter"/>
</dbReference>
<dbReference type="GO" id="GO:0003735">
    <property type="term" value="F:structural constituent of ribosome"/>
    <property type="evidence" value="ECO:0007669"/>
    <property type="project" value="InterPro"/>
</dbReference>
<dbReference type="GO" id="GO:0002181">
    <property type="term" value="P:cytoplasmic translation"/>
    <property type="evidence" value="ECO:0007669"/>
    <property type="project" value="TreeGrafter"/>
</dbReference>
<dbReference type="GO" id="GO:0051291">
    <property type="term" value="P:protein heterooligomerization"/>
    <property type="evidence" value="ECO:0000314"/>
    <property type="project" value="CAFA"/>
</dbReference>
<dbReference type="GO" id="GO:0051260">
    <property type="term" value="P:protein homooligomerization"/>
    <property type="evidence" value="ECO:0000314"/>
    <property type="project" value="CAFA"/>
</dbReference>
<dbReference type="GO" id="GO:0006414">
    <property type="term" value="P:translational elongation"/>
    <property type="evidence" value="ECO:0007669"/>
    <property type="project" value="InterPro"/>
</dbReference>
<dbReference type="CDD" id="cd05831">
    <property type="entry name" value="Ribosomal_P1"/>
    <property type="match status" value="1"/>
</dbReference>
<dbReference type="FunFam" id="1.10.10.1410:FF:000002">
    <property type="entry name" value="60S acidic ribosomal protein P2"/>
    <property type="match status" value="1"/>
</dbReference>
<dbReference type="Gene3D" id="1.10.10.1410">
    <property type="match status" value="1"/>
</dbReference>
<dbReference type="HAMAP" id="MF_01478">
    <property type="entry name" value="Ribosomal_L12_arch"/>
    <property type="match status" value="1"/>
</dbReference>
<dbReference type="InterPro" id="IPR038716">
    <property type="entry name" value="P1/P2_N_sf"/>
</dbReference>
<dbReference type="InterPro" id="IPR027534">
    <property type="entry name" value="Ribosomal_P1/P2"/>
</dbReference>
<dbReference type="PANTHER" id="PTHR45696">
    <property type="entry name" value="60S ACIDIC RIBOSOMAL PROTEIN P1"/>
    <property type="match status" value="1"/>
</dbReference>
<dbReference type="PANTHER" id="PTHR45696:SF33">
    <property type="entry name" value="LARGE RIBOSOMAL SUBUNIT PROTEIN P1B"/>
    <property type="match status" value="1"/>
</dbReference>
<dbReference type="Pfam" id="PF00428">
    <property type="entry name" value="Ribosomal_60s"/>
    <property type="match status" value="1"/>
</dbReference>
<keyword id="KW-0903">Direct protein sequencing</keyword>
<keyword id="KW-0597">Phosphoprotein</keyword>
<keyword id="KW-0687">Ribonucleoprotein</keyword>
<keyword id="KW-0689">Ribosomal protein</keyword>
<accession>Q9HFQ6</accession>
<sequence>MSTEASVSYAALILADAEQEITSEKLLAITKAAGANVDQVWADVFAKAVEGKNLKELLFSFAAAAPASGAAAGSASGAAAGGEAAAEEAAEEEAAEESDDDMGFGLFD</sequence>
<evidence type="ECO:0000250" key="1"/>
<evidence type="ECO:0000250" key="2">
    <source>
        <dbReference type="UniProtKB" id="P17478"/>
    </source>
</evidence>
<evidence type="ECO:0000256" key="3">
    <source>
        <dbReference type="SAM" id="MobiDB-lite"/>
    </source>
</evidence>
<evidence type="ECO:0000305" key="4"/>
<evidence type="ECO:0000312" key="5">
    <source>
        <dbReference type="EMBL" id="AAG33241.1"/>
    </source>
</evidence>
<name>RLA3_CANAX</name>